<name>RL36_THERP</name>
<evidence type="ECO:0000255" key="1">
    <source>
        <dbReference type="HAMAP-Rule" id="MF_00251"/>
    </source>
</evidence>
<evidence type="ECO:0000305" key="2"/>
<organism>
    <name type="scientific">Thermomicrobium roseum (strain ATCC 27502 / DSM 5159 / P-2)</name>
    <dbReference type="NCBI Taxonomy" id="309801"/>
    <lineage>
        <taxon>Bacteria</taxon>
        <taxon>Pseudomonadati</taxon>
        <taxon>Thermomicrobiota</taxon>
        <taxon>Thermomicrobia</taxon>
        <taxon>Thermomicrobiales</taxon>
        <taxon>Thermomicrobiaceae</taxon>
        <taxon>Thermomicrobium</taxon>
    </lineage>
</organism>
<dbReference type="EMBL" id="CP001275">
    <property type="protein sequence ID" value="ACM05230.1"/>
    <property type="molecule type" value="Genomic_DNA"/>
</dbReference>
<dbReference type="RefSeq" id="WP_015921925.1">
    <property type="nucleotide sequence ID" value="NC_011959.1"/>
</dbReference>
<dbReference type="SMR" id="B9KZW4"/>
<dbReference type="STRING" id="309801.trd_0961"/>
<dbReference type="KEGG" id="tro:trd_0961"/>
<dbReference type="eggNOG" id="COG0257">
    <property type="taxonomic scope" value="Bacteria"/>
</dbReference>
<dbReference type="HOGENOM" id="CLU_135723_6_2_0"/>
<dbReference type="Proteomes" id="UP000000447">
    <property type="component" value="Chromosome"/>
</dbReference>
<dbReference type="GO" id="GO:0005737">
    <property type="term" value="C:cytoplasm"/>
    <property type="evidence" value="ECO:0007669"/>
    <property type="project" value="UniProtKB-ARBA"/>
</dbReference>
<dbReference type="GO" id="GO:1990904">
    <property type="term" value="C:ribonucleoprotein complex"/>
    <property type="evidence" value="ECO:0007669"/>
    <property type="project" value="UniProtKB-KW"/>
</dbReference>
<dbReference type="GO" id="GO:0005840">
    <property type="term" value="C:ribosome"/>
    <property type="evidence" value="ECO:0007669"/>
    <property type="project" value="UniProtKB-KW"/>
</dbReference>
<dbReference type="GO" id="GO:0003735">
    <property type="term" value="F:structural constituent of ribosome"/>
    <property type="evidence" value="ECO:0007669"/>
    <property type="project" value="InterPro"/>
</dbReference>
<dbReference type="GO" id="GO:0006412">
    <property type="term" value="P:translation"/>
    <property type="evidence" value="ECO:0007669"/>
    <property type="project" value="UniProtKB-UniRule"/>
</dbReference>
<dbReference type="HAMAP" id="MF_00251">
    <property type="entry name" value="Ribosomal_bL36"/>
    <property type="match status" value="1"/>
</dbReference>
<dbReference type="InterPro" id="IPR000473">
    <property type="entry name" value="Ribosomal_bL36"/>
</dbReference>
<dbReference type="InterPro" id="IPR035977">
    <property type="entry name" value="Ribosomal_bL36_sp"/>
</dbReference>
<dbReference type="NCBIfam" id="TIGR01022">
    <property type="entry name" value="rpmJ_bact"/>
    <property type="match status" value="1"/>
</dbReference>
<dbReference type="PANTHER" id="PTHR42888">
    <property type="entry name" value="50S RIBOSOMAL PROTEIN L36, CHLOROPLASTIC"/>
    <property type="match status" value="1"/>
</dbReference>
<dbReference type="PANTHER" id="PTHR42888:SF1">
    <property type="entry name" value="LARGE RIBOSOMAL SUBUNIT PROTEIN BL36C"/>
    <property type="match status" value="1"/>
</dbReference>
<dbReference type="Pfam" id="PF00444">
    <property type="entry name" value="Ribosomal_L36"/>
    <property type="match status" value="1"/>
</dbReference>
<dbReference type="SUPFAM" id="SSF57840">
    <property type="entry name" value="Ribosomal protein L36"/>
    <property type="match status" value="1"/>
</dbReference>
<dbReference type="PROSITE" id="PS00828">
    <property type="entry name" value="RIBOSOMAL_L36"/>
    <property type="match status" value="1"/>
</dbReference>
<protein>
    <recommendedName>
        <fullName evidence="1">Large ribosomal subunit protein bL36</fullName>
    </recommendedName>
    <alternativeName>
        <fullName evidence="2">50S ribosomal protein L36</fullName>
    </alternativeName>
</protein>
<keyword id="KW-1185">Reference proteome</keyword>
<keyword id="KW-0687">Ribonucleoprotein</keyword>
<keyword id="KW-0689">Ribosomal protein</keyword>
<comment type="similarity">
    <text evidence="1">Belongs to the bacterial ribosomal protein bL36 family.</text>
</comment>
<sequence length="37" mass="4343">MKVSASVKRRCAKCRIIRRHGIVRVICENPKHKQRQG</sequence>
<accession>B9KZW4</accession>
<reference key="1">
    <citation type="journal article" date="2009" name="PLoS ONE">
        <title>Complete genome sequence of the aerobic CO-oxidizing thermophile Thermomicrobium roseum.</title>
        <authorList>
            <person name="Wu D."/>
            <person name="Raymond J."/>
            <person name="Wu M."/>
            <person name="Chatterji S."/>
            <person name="Ren Q."/>
            <person name="Graham J.E."/>
            <person name="Bryant D.A."/>
            <person name="Robb F."/>
            <person name="Colman A."/>
            <person name="Tallon L.J."/>
            <person name="Badger J.H."/>
            <person name="Madupu R."/>
            <person name="Ward N.L."/>
            <person name="Eisen J.A."/>
        </authorList>
    </citation>
    <scope>NUCLEOTIDE SEQUENCE [LARGE SCALE GENOMIC DNA]</scope>
    <source>
        <strain>ATCC 27502 / DSM 5159 / P-2</strain>
    </source>
</reference>
<proteinExistence type="inferred from homology"/>
<feature type="chain" id="PRO_1000125508" description="Large ribosomal subunit protein bL36">
    <location>
        <begin position="1"/>
        <end position="37"/>
    </location>
</feature>
<gene>
    <name evidence="1" type="primary">rpmJ</name>
    <name type="ordered locus">trd_0961</name>
</gene>